<organism>
    <name type="scientific">Bacillus cereus (strain AH187)</name>
    <dbReference type="NCBI Taxonomy" id="405534"/>
    <lineage>
        <taxon>Bacteria</taxon>
        <taxon>Bacillati</taxon>
        <taxon>Bacillota</taxon>
        <taxon>Bacilli</taxon>
        <taxon>Bacillales</taxon>
        <taxon>Bacillaceae</taxon>
        <taxon>Bacillus</taxon>
        <taxon>Bacillus cereus group</taxon>
    </lineage>
</organism>
<feature type="chain" id="PRO_1000124603" description="Thiazole synthase">
    <location>
        <begin position="1"/>
        <end position="256"/>
    </location>
</feature>
<feature type="active site" description="Schiff-base intermediate with DXP" evidence="1">
    <location>
        <position position="96"/>
    </location>
</feature>
<feature type="binding site" evidence="1">
    <location>
        <position position="157"/>
    </location>
    <ligand>
        <name>1-deoxy-D-xylulose 5-phosphate</name>
        <dbReference type="ChEBI" id="CHEBI:57792"/>
    </ligand>
</feature>
<feature type="binding site" evidence="1">
    <location>
        <begin position="183"/>
        <end position="184"/>
    </location>
    <ligand>
        <name>1-deoxy-D-xylulose 5-phosphate</name>
        <dbReference type="ChEBI" id="CHEBI:57792"/>
    </ligand>
</feature>
<feature type="binding site" evidence="1">
    <location>
        <begin position="205"/>
        <end position="206"/>
    </location>
    <ligand>
        <name>1-deoxy-D-xylulose 5-phosphate</name>
        <dbReference type="ChEBI" id="CHEBI:57792"/>
    </ligand>
</feature>
<gene>
    <name evidence="1" type="primary">thiG</name>
    <name type="ordered locus">BCAH187_A0886</name>
</gene>
<accession>B7HWF4</accession>
<protein>
    <recommendedName>
        <fullName evidence="1">Thiazole synthase</fullName>
        <ecNumber evidence="1">2.8.1.10</ecNumber>
    </recommendedName>
</protein>
<name>THIG_BACC7</name>
<reference key="1">
    <citation type="submission" date="2008-10" db="EMBL/GenBank/DDBJ databases">
        <title>Genome sequence of Bacillus cereus AH187.</title>
        <authorList>
            <person name="Dodson R.J."/>
            <person name="Durkin A.S."/>
            <person name="Rosovitz M.J."/>
            <person name="Rasko D.A."/>
            <person name="Kolsto A.B."/>
            <person name="Okstad O.A."/>
            <person name="Ravel J."/>
            <person name="Sutton G."/>
        </authorList>
    </citation>
    <scope>NUCLEOTIDE SEQUENCE [LARGE SCALE GENOMIC DNA]</scope>
    <source>
        <strain>AH187</strain>
    </source>
</reference>
<dbReference type="EC" id="2.8.1.10" evidence="1"/>
<dbReference type="EMBL" id="CP001177">
    <property type="protein sequence ID" value="ACJ79120.1"/>
    <property type="molecule type" value="Genomic_DNA"/>
</dbReference>
<dbReference type="SMR" id="B7HWF4"/>
<dbReference type="KEGG" id="bcr:BCAH187_A0886"/>
<dbReference type="HOGENOM" id="CLU_062233_1_0_9"/>
<dbReference type="UniPathway" id="UPA00060"/>
<dbReference type="Proteomes" id="UP000002214">
    <property type="component" value="Chromosome"/>
</dbReference>
<dbReference type="GO" id="GO:0005737">
    <property type="term" value="C:cytoplasm"/>
    <property type="evidence" value="ECO:0007669"/>
    <property type="project" value="UniProtKB-SubCell"/>
</dbReference>
<dbReference type="GO" id="GO:1990107">
    <property type="term" value="F:thiazole synthase activity"/>
    <property type="evidence" value="ECO:0007669"/>
    <property type="project" value="UniProtKB-EC"/>
</dbReference>
<dbReference type="GO" id="GO:0009229">
    <property type="term" value="P:thiamine diphosphate biosynthetic process"/>
    <property type="evidence" value="ECO:0007669"/>
    <property type="project" value="UniProtKB-UniRule"/>
</dbReference>
<dbReference type="CDD" id="cd04728">
    <property type="entry name" value="ThiG"/>
    <property type="match status" value="1"/>
</dbReference>
<dbReference type="FunFam" id="3.20.20.70:FF:000049">
    <property type="entry name" value="Thiazole synthase"/>
    <property type="match status" value="1"/>
</dbReference>
<dbReference type="Gene3D" id="3.20.20.70">
    <property type="entry name" value="Aldolase class I"/>
    <property type="match status" value="1"/>
</dbReference>
<dbReference type="HAMAP" id="MF_00443">
    <property type="entry name" value="ThiG"/>
    <property type="match status" value="1"/>
</dbReference>
<dbReference type="InterPro" id="IPR013785">
    <property type="entry name" value="Aldolase_TIM"/>
</dbReference>
<dbReference type="InterPro" id="IPR033983">
    <property type="entry name" value="Thiazole_synthase_ThiG"/>
</dbReference>
<dbReference type="InterPro" id="IPR008867">
    <property type="entry name" value="ThiG"/>
</dbReference>
<dbReference type="PANTHER" id="PTHR34266">
    <property type="entry name" value="THIAZOLE SYNTHASE"/>
    <property type="match status" value="1"/>
</dbReference>
<dbReference type="PANTHER" id="PTHR34266:SF2">
    <property type="entry name" value="THIAZOLE SYNTHASE"/>
    <property type="match status" value="1"/>
</dbReference>
<dbReference type="Pfam" id="PF05690">
    <property type="entry name" value="ThiG"/>
    <property type="match status" value="1"/>
</dbReference>
<dbReference type="SUPFAM" id="SSF110399">
    <property type="entry name" value="ThiG-like"/>
    <property type="match status" value="1"/>
</dbReference>
<proteinExistence type="inferred from homology"/>
<sequence length="256" mass="27229">MLNIGPFSFHSRLLLGTGKFPDFDVQQKAIDVSEAEILTFAVRRMDIFDAKQPNLLERLDVKKYTLLPNTAGAKNAEEAVRIAKLAKASGLCDMIKVEVIGDDRTLLPDPVETLKASEMLLEEGFIVLPYTSDDVVLARKLQELGVHAIMPGASPIGSGLGIVNPLNLSFIIEQATLPVIVDAGIGSPADAAFAMELGADGVLLNTAVSGAKDPIKMAQAMKLSIEAGRLGFEAGRIARKRCATASSPLEGMSVVE</sequence>
<evidence type="ECO:0000255" key="1">
    <source>
        <dbReference type="HAMAP-Rule" id="MF_00443"/>
    </source>
</evidence>
<comment type="function">
    <text evidence="1">Catalyzes the rearrangement of 1-deoxy-D-xylulose 5-phosphate (DXP) to produce the thiazole phosphate moiety of thiamine. Sulfur is provided by the thiocarboxylate moiety of the carrier protein ThiS. In vitro, sulfur can be provided by H(2)S.</text>
</comment>
<comment type="catalytic activity">
    <reaction evidence="1">
        <text>[ThiS sulfur-carrier protein]-C-terminal-Gly-aminoethanethioate + 2-iminoacetate + 1-deoxy-D-xylulose 5-phosphate = [ThiS sulfur-carrier protein]-C-terminal Gly-Gly + 2-[(2R,5Z)-2-carboxy-4-methylthiazol-5(2H)-ylidene]ethyl phosphate + 2 H2O + H(+)</text>
        <dbReference type="Rhea" id="RHEA:26297"/>
        <dbReference type="Rhea" id="RHEA-COMP:12909"/>
        <dbReference type="Rhea" id="RHEA-COMP:19908"/>
        <dbReference type="ChEBI" id="CHEBI:15377"/>
        <dbReference type="ChEBI" id="CHEBI:15378"/>
        <dbReference type="ChEBI" id="CHEBI:57792"/>
        <dbReference type="ChEBI" id="CHEBI:62899"/>
        <dbReference type="ChEBI" id="CHEBI:77846"/>
        <dbReference type="ChEBI" id="CHEBI:90778"/>
        <dbReference type="ChEBI" id="CHEBI:232372"/>
        <dbReference type="EC" id="2.8.1.10"/>
    </reaction>
</comment>
<comment type="pathway">
    <text evidence="1">Cofactor biosynthesis; thiamine diphosphate biosynthesis.</text>
</comment>
<comment type="subunit">
    <text evidence="1">Homotetramer. Forms heterodimers with either ThiH or ThiS.</text>
</comment>
<comment type="subcellular location">
    <subcellularLocation>
        <location evidence="1">Cytoplasm</location>
    </subcellularLocation>
</comment>
<comment type="similarity">
    <text evidence="1">Belongs to the ThiG family.</text>
</comment>
<keyword id="KW-0963">Cytoplasm</keyword>
<keyword id="KW-0704">Schiff base</keyword>
<keyword id="KW-0784">Thiamine biosynthesis</keyword>
<keyword id="KW-0808">Transferase</keyword>